<name>HUTH_BURCJ</name>
<reference key="1">
    <citation type="journal article" date="2009" name="J. Bacteriol.">
        <title>The genome of Burkholderia cenocepacia J2315, an epidemic pathogen of cystic fibrosis patients.</title>
        <authorList>
            <person name="Holden M.T."/>
            <person name="Seth-Smith H.M."/>
            <person name="Crossman L.C."/>
            <person name="Sebaihia M."/>
            <person name="Bentley S.D."/>
            <person name="Cerdeno-Tarraga A.M."/>
            <person name="Thomson N.R."/>
            <person name="Bason N."/>
            <person name="Quail M.A."/>
            <person name="Sharp S."/>
            <person name="Cherevach I."/>
            <person name="Churcher C."/>
            <person name="Goodhead I."/>
            <person name="Hauser H."/>
            <person name="Holroyd N."/>
            <person name="Mungall K."/>
            <person name="Scott P."/>
            <person name="Walker D."/>
            <person name="White B."/>
            <person name="Rose H."/>
            <person name="Iversen P."/>
            <person name="Mil-Homens D."/>
            <person name="Rocha E.P."/>
            <person name="Fialho A.M."/>
            <person name="Baldwin A."/>
            <person name="Dowson C."/>
            <person name="Barrell B.G."/>
            <person name="Govan J.R."/>
            <person name="Vandamme P."/>
            <person name="Hart C.A."/>
            <person name="Mahenthiralingam E."/>
            <person name="Parkhill J."/>
        </authorList>
    </citation>
    <scope>NUCLEOTIDE SEQUENCE [LARGE SCALE GENOMIC DNA]</scope>
    <source>
        <strain>ATCC BAA-245 / DSM 16553 / LMG 16656 / NCTC 13227 / J2315 / CF5610</strain>
    </source>
</reference>
<gene>
    <name evidence="1" type="primary">hutH</name>
    <name type="ordered locus">BceJ2315_22080</name>
    <name type="ORF">BCAL2246</name>
</gene>
<evidence type="ECO:0000255" key="1">
    <source>
        <dbReference type="HAMAP-Rule" id="MF_00229"/>
    </source>
</evidence>
<dbReference type="EC" id="4.3.1.3" evidence="1"/>
<dbReference type="EMBL" id="AM747720">
    <property type="protein sequence ID" value="CAR52547.1"/>
    <property type="molecule type" value="Genomic_DNA"/>
</dbReference>
<dbReference type="RefSeq" id="WP_006488089.1">
    <property type="nucleotide sequence ID" value="NC_011000.1"/>
</dbReference>
<dbReference type="SMR" id="B4EDX5"/>
<dbReference type="GeneID" id="56558742"/>
<dbReference type="KEGG" id="bcj:BCAL2246"/>
<dbReference type="eggNOG" id="COG2986">
    <property type="taxonomic scope" value="Bacteria"/>
</dbReference>
<dbReference type="HOGENOM" id="CLU_014801_4_0_4"/>
<dbReference type="BioCyc" id="BCEN216591:G1G1V-2472-MONOMER"/>
<dbReference type="UniPathway" id="UPA00379">
    <property type="reaction ID" value="UER00549"/>
</dbReference>
<dbReference type="Proteomes" id="UP000001035">
    <property type="component" value="Chromosome 1"/>
</dbReference>
<dbReference type="GO" id="GO:0005737">
    <property type="term" value="C:cytoplasm"/>
    <property type="evidence" value="ECO:0007669"/>
    <property type="project" value="UniProtKB-SubCell"/>
</dbReference>
<dbReference type="GO" id="GO:0004397">
    <property type="term" value="F:histidine ammonia-lyase activity"/>
    <property type="evidence" value="ECO:0007669"/>
    <property type="project" value="UniProtKB-UniRule"/>
</dbReference>
<dbReference type="GO" id="GO:0019556">
    <property type="term" value="P:L-histidine catabolic process to glutamate and formamide"/>
    <property type="evidence" value="ECO:0007669"/>
    <property type="project" value="UniProtKB-UniPathway"/>
</dbReference>
<dbReference type="GO" id="GO:0019557">
    <property type="term" value="P:L-histidine catabolic process to glutamate and formate"/>
    <property type="evidence" value="ECO:0007669"/>
    <property type="project" value="UniProtKB-UniPathway"/>
</dbReference>
<dbReference type="CDD" id="cd00332">
    <property type="entry name" value="PAL-HAL"/>
    <property type="match status" value="1"/>
</dbReference>
<dbReference type="FunFam" id="1.10.275.10:FF:000005">
    <property type="entry name" value="Histidine ammonia-lyase"/>
    <property type="match status" value="1"/>
</dbReference>
<dbReference type="FunFam" id="1.20.200.10:FF:000003">
    <property type="entry name" value="Histidine ammonia-lyase"/>
    <property type="match status" value="1"/>
</dbReference>
<dbReference type="Gene3D" id="1.20.200.10">
    <property type="entry name" value="Fumarase/aspartase (Central domain)"/>
    <property type="match status" value="1"/>
</dbReference>
<dbReference type="Gene3D" id="1.10.275.10">
    <property type="entry name" value="Fumarase/aspartase (N-terminal domain)"/>
    <property type="match status" value="1"/>
</dbReference>
<dbReference type="HAMAP" id="MF_00229">
    <property type="entry name" value="His_ammonia_lyase"/>
    <property type="match status" value="1"/>
</dbReference>
<dbReference type="InterPro" id="IPR001106">
    <property type="entry name" value="Aromatic_Lyase"/>
</dbReference>
<dbReference type="InterPro" id="IPR024083">
    <property type="entry name" value="Fumarase/histidase_N"/>
</dbReference>
<dbReference type="InterPro" id="IPR005921">
    <property type="entry name" value="HutH"/>
</dbReference>
<dbReference type="InterPro" id="IPR008948">
    <property type="entry name" value="L-Aspartase-like"/>
</dbReference>
<dbReference type="InterPro" id="IPR022313">
    <property type="entry name" value="Phe/His_NH3-lyase_AS"/>
</dbReference>
<dbReference type="NCBIfam" id="TIGR01225">
    <property type="entry name" value="hutH"/>
    <property type="match status" value="1"/>
</dbReference>
<dbReference type="NCBIfam" id="NF006871">
    <property type="entry name" value="PRK09367.1"/>
    <property type="match status" value="1"/>
</dbReference>
<dbReference type="PANTHER" id="PTHR10362">
    <property type="entry name" value="HISTIDINE AMMONIA-LYASE"/>
    <property type="match status" value="1"/>
</dbReference>
<dbReference type="Pfam" id="PF00221">
    <property type="entry name" value="Lyase_aromatic"/>
    <property type="match status" value="1"/>
</dbReference>
<dbReference type="SUPFAM" id="SSF48557">
    <property type="entry name" value="L-aspartase-like"/>
    <property type="match status" value="1"/>
</dbReference>
<dbReference type="PROSITE" id="PS00488">
    <property type="entry name" value="PAL_HISTIDASE"/>
    <property type="match status" value="1"/>
</dbReference>
<comment type="catalytic activity">
    <reaction evidence="1">
        <text>L-histidine = trans-urocanate + NH4(+)</text>
        <dbReference type="Rhea" id="RHEA:21232"/>
        <dbReference type="ChEBI" id="CHEBI:17771"/>
        <dbReference type="ChEBI" id="CHEBI:28938"/>
        <dbReference type="ChEBI" id="CHEBI:57595"/>
        <dbReference type="EC" id="4.3.1.3"/>
    </reaction>
</comment>
<comment type="pathway">
    <text evidence="1">Amino-acid degradation; L-histidine degradation into L-glutamate; N-formimidoyl-L-glutamate from L-histidine: step 1/3.</text>
</comment>
<comment type="subcellular location">
    <subcellularLocation>
        <location evidence="1">Cytoplasm</location>
    </subcellularLocation>
</comment>
<comment type="PTM">
    <text evidence="1">Contains an active site 4-methylidene-imidazol-5-one (MIO), which is formed autocatalytically by cyclization and dehydration of residues Ala-Ser-Gly.</text>
</comment>
<comment type="similarity">
    <text evidence="1">Belongs to the PAL/histidase family.</text>
</comment>
<protein>
    <recommendedName>
        <fullName evidence="1">Histidine ammonia-lyase</fullName>
        <shortName evidence="1">Histidase</shortName>
        <ecNumber evidence="1">4.3.1.3</ecNumber>
    </recommendedName>
</protein>
<proteinExistence type="inferred from homology"/>
<feature type="chain" id="PRO_1000100437" description="Histidine ammonia-lyase">
    <location>
        <begin position="1"/>
        <end position="507"/>
    </location>
</feature>
<feature type="modified residue" description="2,3-didehydroalanine (Ser)" evidence="1">
    <location>
        <position position="142"/>
    </location>
</feature>
<feature type="cross-link" description="5-imidazolinone (Ala-Gly)" evidence="1">
    <location>
        <begin position="141"/>
        <end position="143"/>
    </location>
</feature>
<keyword id="KW-0963">Cytoplasm</keyword>
<keyword id="KW-0369">Histidine metabolism</keyword>
<keyword id="KW-0456">Lyase</keyword>
<sequence>MITLTPGHLTLPQLRQIARESVQLKLDPASFAKIDAGAKAVADIAAKGEPAYGINTGFGRLASTHIPHDQLELLQKNLVLSHAVGVGEPMARSSVRLLMALKLSSLGRGHSGIRREVMDALITLFNADVLPLIPVKGSVGASGDLAPLAHMSAVLLGVGEVFIRGERASALDGLRVAGLAPLTLQAKEGLALLNGTQASTALALDNMFAIEDLYRTALVAGALSVDAAAGSVKPFDARIHELRGHQGQIDAAASYRELLEGSPINQSHRDCDKVQDPYSLRCQPQVMGACLDQMRHAADVLLVEANAVSDNPLIFPDTGEVLSGGNFHAEPVAFAADNLALAASEIGALAERRIALLIDATLSGLPPFLVKDGGVNSGFMIAHVTAAALASENKTLAHPASVDSLPTSANQEDHVSMATFAARKLADIADNTKHILAIELLAAAQGVDLRAPYHTSPKLAPVMETIRSQVAHYELDHYFAPDIAVIAKLVGERAFAKVAPFSFASEQ</sequence>
<organism>
    <name type="scientific">Burkholderia cenocepacia (strain ATCC BAA-245 / DSM 16553 / LMG 16656 / NCTC 13227 / J2315 / CF5610)</name>
    <name type="common">Burkholderia cepacia (strain J2315)</name>
    <dbReference type="NCBI Taxonomy" id="216591"/>
    <lineage>
        <taxon>Bacteria</taxon>
        <taxon>Pseudomonadati</taxon>
        <taxon>Pseudomonadota</taxon>
        <taxon>Betaproteobacteria</taxon>
        <taxon>Burkholderiales</taxon>
        <taxon>Burkholderiaceae</taxon>
        <taxon>Burkholderia</taxon>
        <taxon>Burkholderia cepacia complex</taxon>
    </lineage>
</organism>
<accession>B4EDX5</accession>